<organism>
    <name type="scientific">Drosophila melanogaster</name>
    <name type="common">Fruit fly</name>
    <dbReference type="NCBI Taxonomy" id="7227"/>
    <lineage>
        <taxon>Eukaryota</taxon>
        <taxon>Metazoa</taxon>
        <taxon>Ecdysozoa</taxon>
        <taxon>Arthropoda</taxon>
        <taxon>Hexapoda</taxon>
        <taxon>Insecta</taxon>
        <taxon>Pterygota</taxon>
        <taxon>Neoptera</taxon>
        <taxon>Endopterygota</taxon>
        <taxon>Diptera</taxon>
        <taxon>Brachycera</taxon>
        <taxon>Muscomorpha</taxon>
        <taxon>Ephydroidea</taxon>
        <taxon>Drosophilidae</taxon>
        <taxon>Drosophila</taxon>
        <taxon>Sophophora</taxon>
    </lineage>
</organism>
<accession>P09180</accession>
<accession>Q9I7H6</accession>
<feature type="chain" id="PRO_0000129359" description="Large ribosomal subunit protein uL4">
    <location>
        <begin position="1"/>
        <end position="401"/>
    </location>
</feature>
<feature type="sequence conflict" description="In Ref. 5; CAA29998." evidence="1" ref="5">
    <original>K</original>
    <variation>R</variation>
    <location>
        <position position="117"/>
    </location>
</feature>
<feature type="sequence conflict" description="In Ref. 1; CAA31759." evidence="1" ref="1">
    <original>L</original>
    <variation>V</variation>
    <location>
        <position position="240"/>
    </location>
</feature>
<feature type="sequence conflict" description="In Ref. 1; CAA31759." evidence="1" ref="1">
    <original>AANRAKLLAARKKKVAAKKPAAKK</original>
    <variation>RPIAPSSGRPQEEGRRQEASGQEVNLLSPE</variation>
    <location>
        <begin position="378"/>
        <end position="401"/>
    </location>
</feature>
<evidence type="ECO:0000305" key="1"/>
<keyword id="KW-0002">3D-structure</keyword>
<keyword id="KW-1185">Reference proteome</keyword>
<keyword id="KW-0687">Ribonucleoprotein</keyword>
<keyword id="KW-0689">Ribosomal protein</keyword>
<reference key="1">
    <citation type="journal article" date="1989" name="Nucleic Acids Res.">
        <title>Sequence of the ribosomal protein cDNA of D. melanogaster homologous to the L1 ribosomal protein gene of X. laevis.</title>
        <authorList>
            <person name="Rafti F."/>
            <person name="Gargiulo G."/>
            <person name="Manzi A."/>
            <person name="Malva C."/>
            <person name="Graziani F."/>
        </authorList>
    </citation>
    <scope>NUCLEOTIDE SEQUENCE [MRNA]</scope>
    <source>
        <strain>Oregon-R</strain>
    </source>
</reference>
<reference key="2">
    <citation type="journal article" date="2000" name="Science">
        <title>The genome sequence of Drosophila melanogaster.</title>
        <authorList>
            <person name="Adams M.D."/>
            <person name="Celniker S.E."/>
            <person name="Holt R.A."/>
            <person name="Evans C.A."/>
            <person name="Gocayne J.D."/>
            <person name="Amanatides P.G."/>
            <person name="Scherer S.E."/>
            <person name="Li P.W."/>
            <person name="Hoskins R.A."/>
            <person name="Galle R.F."/>
            <person name="George R.A."/>
            <person name="Lewis S.E."/>
            <person name="Richards S."/>
            <person name="Ashburner M."/>
            <person name="Henderson S.N."/>
            <person name="Sutton G.G."/>
            <person name="Wortman J.R."/>
            <person name="Yandell M.D."/>
            <person name="Zhang Q."/>
            <person name="Chen L.X."/>
            <person name="Brandon R.C."/>
            <person name="Rogers Y.-H.C."/>
            <person name="Blazej R.G."/>
            <person name="Champe M."/>
            <person name="Pfeiffer B.D."/>
            <person name="Wan K.H."/>
            <person name="Doyle C."/>
            <person name="Baxter E.G."/>
            <person name="Helt G."/>
            <person name="Nelson C.R."/>
            <person name="Miklos G.L.G."/>
            <person name="Abril J.F."/>
            <person name="Agbayani A."/>
            <person name="An H.-J."/>
            <person name="Andrews-Pfannkoch C."/>
            <person name="Baldwin D."/>
            <person name="Ballew R.M."/>
            <person name="Basu A."/>
            <person name="Baxendale J."/>
            <person name="Bayraktaroglu L."/>
            <person name="Beasley E.M."/>
            <person name="Beeson K.Y."/>
            <person name="Benos P.V."/>
            <person name="Berman B.P."/>
            <person name="Bhandari D."/>
            <person name="Bolshakov S."/>
            <person name="Borkova D."/>
            <person name="Botchan M.R."/>
            <person name="Bouck J."/>
            <person name="Brokstein P."/>
            <person name="Brottier P."/>
            <person name="Burtis K.C."/>
            <person name="Busam D.A."/>
            <person name="Butler H."/>
            <person name="Cadieu E."/>
            <person name="Center A."/>
            <person name="Chandra I."/>
            <person name="Cherry J.M."/>
            <person name="Cawley S."/>
            <person name="Dahlke C."/>
            <person name="Davenport L.B."/>
            <person name="Davies P."/>
            <person name="de Pablos B."/>
            <person name="Delcher A."/>
            <person name="Deng Z."/>
            <person name="Mays A.D."/>
            <person name="Dew I."/>
            <person name="Dietz S.M."/>
            <person name="Dodson K."/>
            <person name="Doup L.E."/>
            <person name="Downes M."/>
            <person name="Dugan-Rocha S."/>
            <person name="Dunkov B.C."/>
            <person name="Dunn P."/>
            <person name="Durbin K.J."/>
            <person name="Evangelista C.C."/>
            <person name="Ferraz C."/>
            <person name="Ferriera S."/>
            <person name="Fleischmann W."/>
            <person name="Fosler C."/>
            <person name="Gabrielian A.E."/>
            <person name="Garg N.S."/>
            <person name="Gelbart W.M."/>
            <person name="Glasser K."/>
            <person name="Glodek A."/>
            <person name="Gong F."/>
            <person name="Gorrell J.H."/>
            <person name="Gu Z."/>
            <person name="Guan P."/>
            <person name="Harris M."/>
            <person name="Harris N.L."/>
            <person name="Harvey D.A."/>
            <person name="Heiman T.J."/>
            <person name="Hernandez J.R."/>
            <person name="Houck J."/>
            <person name="Hostin D."/>
            <person name="Houston K.A."/>
            <person name="Howland T.J."/>
            <person name="Wei M.-H."/>
            <person name="Ibegwam C."/>
            <person name="Jalali M."/>
            <person name="Kalush F."/>
            <person name="Karpen G.H."/>
            <person name="Ke Z."/>
            <person name="Kennison J.A."/>
            <person name="Ketchum K.A."/>
            <person name="Kimmel B.E."/>
            <person name="Kodira C.D."/>
            <person name="Kraft C.L."/>
            <person name="Kravitz S."/>
            <person name="Kulp D."/>
            <person name="Lai Z."/>
            <person name="Lasko P."/>
            <person name="Lei Y."/>
            <person name="Levitsky A.A."/>
            <person name="Li J.H."/>
            <person name="Li Z."/>
            <person name="Liang Y."/>
            <person name="Lin X."/>
            <person name="Liu X."/>
            <person name="Mattei B."/>
            <person name="McIntosh T.C."/>
            <person name="McLeod M.P."/>
            <person name="McPherson D."/>
            <person name="Merkulov G."/>
            <person name="Milshina N.V."/>
            <person name="Mobarry C."/>
            <person name="Morris J."/>
            <person name="Moshrefi A."/>
            <person name="Mount S.M."/>
            <person name="Moy M."/>
            <person name="Murphy B."/>
            <person name="Murphy L."/>
            <person name="Muzny D.M."/>
            <person name="Nelson D.L."/>
            <person name="Nelson D.R."/>
            <person name="Nelson K.A."/>
            <person name="Nixon K."/>
            <person name="Nusskern D.R."/>
            <person name="Pacleb J.M."/>
            <person name="Palazzolo M."/>
            <person name="Pittman G.S."/>
            <person name="Pan S."/>
            <person name="Pollard J."/>
            <person name="Puri V."/>
            <person name="Reese M.G."/>
            <person name="Reinert K."/>
            <person name="Remington K."/>
            <person name="Saunders R.D.C."/>
            <person name="Scheeler F."/>
            <person name="Shen H."/>
            <person name="Shue B.C."/>
            <person name="Siden-Kiamos I."/>
            <person name="Simpson M."/>
            <person name="Skupski M.P."/>
            <person name="Smith T.J."/>
            <person name="Spier E."/>
            <person name="Spradling A.C."/>
            <person name="Stapleton M."/>
            <person name="Strong R."/>
            <person name="Sun E."/>
            <person name="Svirskas R."/>
            <person name="Tector C."/>
            <person name="Turner R."/>
            <person name="Venter E."/>
            <person name="Wang A.H."/>
            <person name="Wang X."/>
            <person name="Wang Z.-Y."/>
            <person name="Wassarman D.A."/>
            <person name="Weinstock G.M."/>
            <person name="Weissenbach J."/>
            <person name="Williams S.M."/>
            <person name="Woodage T."/>
            <person name="Worley K.C."/>
            <person name="Wu D."/>
            <person name="Yang S."/>
            <person name="Yao Q.A."/>
            <person name="Ye J."/>
            <person name="Yeh R.-F."/>
            <person name="Zaveri J.S."/>
            <person name="Zhan M."/>
            <person name="Zhang G."/>
            <person name="Zhao Q."/>
            <person name="Zheng L."/>
            <person name="Zheng X.H."/>
            <person name="Zhong F.N."/>
            <person name="Zhong W."/>
            <person name="Zhou X."/>
            <person name="Zhu S.C."/>
            <person name="Zhu X."/>
            <person name="Smith H.O."/>
            <person name="Gibbs R.A."/>
            <person name="Myers E.W."/>
            <person name="Rubin G.M."/>
            <person name="Venter J.C."/>
        </authorList>
    </citation>
    <scope>NUCLEOTIDE SEQUENCE [LARGE SCALE GENOMIC DNA]</scope>
    <source>
        <strain>Berkeley</strain>
    </source>
</reference>
<reference key="3">
    <citation type="journal article" date="2002" name="Genome Biol.">
        <title>Annotation of the Drosophila melanogaster euchromatic genome: a systematic review.</title>
        <authorList>
            <person name="Misra S."/>
            <person name="Crosby M.A."/>
            <person name="Mungall C.J."/>
            <person name="Matthews B.B."/>
            <person name="Campbell K.S."/>
            <person name="Hradecky P."/>
            <person name="Huang Y."/>
            <person name="Kaminker J.S."/>
            <person name="Millburn G.H."/>
            <person name="Prochnik S.E."/>
            <person name="Smith C.D."/>
            <person name="Tupy J.L."/>
            <person name="Whitfield E.J."/>
            <person name="Bayraktaroglu L."/>
            <person name="Berman B.P."/>
            <person name="Bettencourt B.R."/>
            <person name="Celniker S.E."/>
            <person name="de Grey A.D.N.J."/>
            <person name="Drysdale R.A."/>
            <person name="Harris N.L."/>
            <person name="Richter J."/>
            <person name="Russo S."/>
            <person name="Schroeder A.J."/>
            <person name="Shu S.Q."/>
            <person name="Stapleton M."/>
            <person name="Yamada C."/>
            <person name="Ashburner M."/>
            <person name="Gelbart W.M."/>
            <person name="Rubin G.M."/>
            <person name="Lewis S.E."/>
        </authorList>
    </citation>
    <scope>GENOME REANNOTATION</scope>
    <source>
        <strain>Berkeley</strain>
    </source>
</reference>
<reference key="4">
    <citation type="journal article" date="2002" name="Genome Biol.">
        <title>A Drosophila full-length cDNA resource.</title>
        <authorList>
            <person name="Stapleton M."/>
            <person name="Carlson J.W."/>
            <person name="Brokstein P."/>
            <person name="Yu C."/>
            <person name="Champe M."/>
            <person name="George R.A."/>
            <person name="Guarin H."/>
            <person name="Kronmiller B."/>
            <person name="Pacleb J.M."/>
            <person name="Park S."/>
            <person name="Wan K.H."/>
            <person name="Rubin G.M."/>
            <person name="Celniker S.E."/>
        </authorList>
    </citation>
    <scope>NUCLEOTIDE SEQUENCE [LARGE SCALE MRNA]</scope>
    <source>
        <strain>Berkeley</strain>
        <tissue>Embryo</tissue>
    </source>
</reference>
<reference key="5">
    <citation type="journal article" date="1988" name="Nucleic Acids Res.">
        <title>Isolation and structural analysis of a ribosomal protein gene in D.melanogaster.</title>
        <authorList>
            <person name="Rafti F."/>
            <person name="Gargiulo G."/>
            <person name="Manzi A."/>
            <person name="Malva C."/>
            <person name="Grossi G."/>
            <person name="Andone S."/>
            <person name="Graziani F."/>
        </authorList>
    </citation>
    <scope>NUCLEOTIDE SEQUENCE [GENOMIC DNA] OF 63-186</scope>
    <source>
        <strain>Oregon-R</strain>
    </source>
</reference>
<reference key="6">
    <citation type="journal article" date="2013" name="Nature">
        <title>Structures of the human and Drosophila 80S ribosome.</title>
        <authorList>
            <person name="Anger A.M."/>
            <person name="Armache J.P."/>
            <person name="Berninghausen O."/>
            <person name="Habeck M."/>
            <person name="Subklewe M."/>
            <person name="Wilson D.N."/>
            <person name="Beckmann R."/>
        </authorList>
    </citation>
    <scope>STRUCTURE BY ELECTRON MICROSCOPY (6.0 ANGSTROMS) OF THE 80S RIBOSOME</scope>
</reference>
<name>RL4_DROME</name>
<sequence>MSLGNARPLVSVYTEKNEPAKDKNICLPAVFKAPIRPDVVNEVHQLLRRNNRQAYAVSELAGHQTSAESWGTGRAVARIPRVRGGGTHRSGQGAFGNMCRGGRMFAPTKTFRRWHRKVNVNQRRYALVSAIAASGVPALVQSKGHVIDGVSEFPLVVSDEVQKVQKTKQAVIFLRRLKIWADIQKVYKSQRFRAGRGTMRDRRRIARRGPLVVYDKDEGLRKAFRNIPGIETINVDKLNLLKLAPGGHVGRFVIWTESAFARLNDLFGTWKKPSTLKKGYNLPQPKMANTDLSRLLKSEEIRKVLRDPRKRVFRSVRRLNPLTNVRQLIKLNPYAEVLKRRAALAAEKRTVAKVLAKAKKQNVELAKSHFANVATKAAANRAKLLAARKKKVAAKKPAAKK</sequence>
<protein>
    <recommendedName>
        <fullName evidence="1">Large ribosomal subunit protein uL4</fullName>
    </recommendedName>
    <alternativeName>
        <fullName>60S ribosomal protein L4</fullName>
    </alternativeName>
    <alternativeName>
        <fullName>L1</fullName>
    </alternativeName>
</protein>
<proteinExistence type="evidence at protein level"/>
<dbReference type="EMBL" id="X13382">
    <property type="protein sequence ID" value="CAA31759.1"/>
    <property type="molecule type" value="mRNA"/>
</dbReference>
<dbReference type="EMBL" id="AE014297">
    <property type="protein sequence ID" value="AAG22173.1"/>
    <property type="molecule type" value="Genomic_DNA"/>
</dbReference>
<dbReference type="EMBL" id="AY069485">
    <property type="protein sequence ID" value="AAL39630.1"/>
    <property type="molecule type" value="mRNA"/>
</dbReference>
<dbReference type="EMBL" id="X06881">
    <property type="protein sequence ID" value="CAA29998.1"/>
    <property type="molecule type" value="Genomic_DNA"/>
</dbReference>
<dbReference type="PIR" id="S02209">
    <property type="entry name" value="R5FFL1"/>
</dbReference>
<dbReference type="RefSeq" id="NP_524538.2">
    <property type="nucleotide sequence ID" value="NM_079814.3"/>
</dbReference>
<dbReference type="PDB" id="4V6W">
    <property type="method" value="EM"/>
    <property type="resolution" value="6.00 A"/>
    <property type="chains" value="CC=1-401"/>
</dbReference>
<dbReference type="PDB" id="6XU6">
    <property type="method" value="EM"/>
    <property type="resolution" value="3.50 A"/>
    <property type="chains" value="CC=2-393"/>
</dbReference>
<dbReference type="PDB" id="6XU7">
    <property type="method" value="EM"/>
    <property type="resolution" value="4.90 A"/>
    <property type="chains" value="CC=2-393"/>
</dbReference>
<dbReference type="PDB" id="6XU8">
    <property type="method" value="EM"/>
    <property type="resolution" value="3.00 A"/>
    <property type="chains" value="CC=2-393"/>
</dbReference>
<dbReference type="PDBsum" id="4V6W"/>
<dbReference type="PDBsum" id="6XU6"/>
<dbReference type="PDBsum" id="6XU7"/>
<dbReference type="PDBsum" id="6XU8"/>
<dbReference type="EMDB" id="EMD-10622"/>
<dbReference type="EMDB" id="EMD-10623"/>
<dbReference type="EMDB" id="EMD-10624"/>
<dbReference type="SMR" id="P09180"/>
<dbReference type="BioGRID" id="68230">
    <property type="interactions" value="115"/>
</dbReference>
<dbReference type="FunCoup" id="P09180">
    <property type="interactions" value="1266"/>
</dbReference>
<dbReference type="IntAct" id="P09180">
    <property type="interactions" value="3"/>
</dbReference>
<dbReference type="MINT" id="P09180"/>
<dbReference type="STRING" id="7227.FBpp0084617"/>
<dbReference type="PaxDb" id="7227-FBpp0084617"/>
<dbReference type="DNASU" id="43349"/>
<dbReference type="EnsemblMetazoa" id="FBtr0085248">
    <property type="protein sequence ID" value="FBpp0084617"/>
    <property type="gene ID" value="FBgn0003279"/>
</dbReference>
<dbReference type="GeneID" id="43349"/>
<dbReference type="KEGG" id="dme:Dmel_CG5502"/>
<dbReference type="AGR" id="FB:FBgn0003279"/>
<dbReference type="CTD" id="6124"/>
<dbReference type="FlyBase" id="FBgn0003279">
    <property type="gene designation" value="RpL4"/>
</dbReference>
<dbReference type="VEuPathDB" id="VectorBase:FBgn0003279"/>
<dbReference type="eggNOG" id="KOG1475">
    <property type="taxonomic scope" value="Eukaryota"/>
</dbReference>
<dbReference type="HOGENOM" id="CLU_026535_4_0_1"/>
<dbReference type="InParanoid" id="P09180"/>
<dbReference type="OMA" id="ALYGTWR"/>
<dbReference type="OrthoDB" id="10259785at2759"/>
<dbReference type="PhylomeDB" id="P09180"/>
<dbReference type="Reactome" id="R-DME-156827">
    <property type="pathway name" value="L13a-mediated translational silencing of Ceruloplasmin expression"/>
</dbReference>
<dbReference type="Reactome" id="R-DME-1799339">
    <property type="pathway name" value="SRP-dependent cotranslational protein targeting to membrane"/>
</dbReference>
<dbReference type="Reactome" id="R-DME-72689">
    <property type="pathway name" value="Formation of a pool of free 40S subunits"/>
</dbReference>
<dbReference type="Reactome" id="R-DME-72706">
    <property type="pathway name" value="GTP hydrolysis and joining of the 60S ribosomal subunit"/>
</dbReference>
<dbReference type="Reactome" id="R-DME-975956">
    <property type="pathway name" value="Nonsense Mediated Decay (NMD) independent of the Exon Junction Complex (EJC)"/>
</dbReference>
<dbReference type="Reactome" id="R-DME-975957">
    <property type="pathway name" value="Nonsense Mediated Decay (NMD) enhanced by the Exon Junction Complex (EJC)"/>
</dbReference>
<dbReference type="SignaLink" id="P09180"/>
<dbReference type="BioGRID-ORCS" id="43349">
    <property type="hits" value="1 hit in 1 CRISPR screen"/>
</dbReference>
<dbReference type="ChiTaRS" id="RpL4">
    <property type="organism name" value="fly"/>
</dbReference>
<dbReference type="GenomeRNAi" id="43349"/>
<dbReference type="PRO" id="PR:P09180"/>
<dbReference type="Proteomes" id="UP000000803">
    <property type="component" value="Chromosome 3R"/>
</dbReference>
<dbReference type="Bgee" id="FBgn0003279">
    <property type="expression patterns" value="Expressed in adult enteroendocrine precursor cell in adult midgut (Drosophila) and 273 other cell types or tissues"/>
</dbReference>
<dbReference type="ExpressionAtlas" id="P09180">
    <property type="expression patterns" value="baseline and differential"/>
</dbReference>
<dbReference type="GO" id="GO:0022625">
    <property type="term" value="C:cytosolic large ribosomal subunit"/>
    <property type="evidence" value="ECO:0000318"/>
    <property type="project" value="GO_Central"/>
</dbReference>
<dbReference type="GO" id="GO:0022626">
    <property type="term" value="C:cytosolic ribosome"/>
    <property type="evidence" value="ECO:0000314"/>
    <property type="project" value="FlyBase"/>
</dbReference>
<dbReference type="GO" id="GO:0003723">
    <property type="term" value="F:RNA binding"/>
    <property type="evidence" value="ECO:0000318"/>
    <property type="project" value="GO_Central"/>
</dbReference>
<dbReference type="GO" id="GO:0003735">
    <property type="term" value="F:structural constituent of ribosome"/>
    <property type="evidence" value="ECO:0000314"/>
    <property type="project" value="FlyBase"/>
</dbReference>
<dbReference type="GO" id="GO:0002181">
    <property type="term" value="P:cytoplasmic translation"/>
    <property type="evidence" value="ECO:0000304"/>
    <property type="project" value="FlyBase"/>
</dbReference>
<dbReference type="FunFam" id="3.40.1370.10:FF:000002">
    <property type="entry name" value="60S ribosomal protein L4"/>
    <property type="match status" value="1"/>
</dbReference>
<dbReference type="Gene3D" id="3.40.1370.10">
    <property type="match status" value="1"/>
</dbReference>
<dbReference type="InterPro" id="IPR025755">
    <property type="entry name" value="Ribos_uL4_C_dom"/>
</dbReference>
<dbReference type="InterPro" id="IPR002136">
    <property type="entry name" value="Ribosomal_uL4"/>
</dbReference>
<dbReference type="InterPro" id="IPR023574">
    <property type="entry name" value="Ribosomal_uL4_dom_sf"/>
</dbReference>
<dbReference type="InterPro" id="IPR013000">
    <property type="entry name" value="Ribosomal_uL4_euk/arc_CS"/>
</dbReference>
<dbReference type="InterPro" id="IPR045240">
    <property type="entry name" value="Ribosomal_uL4_euk/arch"/>
</dbReference>
<dbReference type="PANTHER" id="PTHR19431">
    <property type="entry name" value="60S RIBOSOMAL PROTEIN L4"/>
    <property type="match status" value="1"/>
</dbReference>
<dbReference type="Pfam" id="PF14374">
    <property type="entry name" value="Ribos_L4_asso_C"/>
    <property type="match status" value="1"/>
</dbReference>
<dbReference type="Pfam" id="PF00573">
    <property type="entry name" value="Ribosomal_L4"/>
    <property type="match status" value="1"/>
</dbReference>
<dbReference type="SUPFAM" id="SSF52166">
    <property type="entry name" value="Ribosomal protein L4"/>
    <property type="match status" value="1"/>
</dbReference>
<dbReference type="PROSITE" id="PS00939">
    <property type="entry name" value="RIBOSOMAL_L1E"/>
    <property type="match status" value="1"/>
</dbReference>
<comment type="similarity">
    <text evidence="1">Belongs to the universal ribosomal protein uL4 family.</text>
</comment>
<gene>
    <name type="primary">RpL4</name>
    <name type="synonym">RpL1</name>
    <name type="ORF">CG5502</name>
</gene>